<name>WTR20_ARATH</name>
<sequence length="360" mass="39531">MPIMAGTASPWRREAVFLTAMLVVETSVVGISTLFKFATSKGLNIYPFLGYSYLLASLLLLPSLFFTNRSSSLPPLSVSILSKIGLLGFLGSMYVITGYIGIEYSSPTLASAINNITPALTFILAIIFRMEKVSFKERSSLAKLMGTILSLIGALVVIFYHGPRVFLASSPPYVNFRQFSPPLSSSNSDWLIGGALLTMQGIFVSVSFILQAHIMSVYPAAFRVSFLYTVCVSIVTSTIGLVVEKNNPSVWIIHFDITLITIVTMAIVTSVYYVIHSWTVRHKGPLYLAIFKPLSILIAVVMGAIFLNDSLYLGCLIGGILITLGFYAVMWGKANEEKDQLSFSEKEKTPLLLNRKNDQV</sequence>
<organism>
    <name type="scientific">Arabidopsis thaliana</name>
    <name type="common">Mouse-ear cress</name>
    <dbReference type="NCBI Taxonomy" id="3702"/>
    <lineage>
        <taxon>Eukaryota</taxon>
        <taxon>Viridiplantae</taxon>
        <taxon>Streptophyta</taxon>
        <taxon>Embryophyta</taxon>
        <taxon>Tracheophyta</taxon>
        <taxon>Spermatophyta</taxon>
        <taxon>Magnoliopsida</taxon>
        <taxon>eudicotyledons</taxon>
        <taxon>Gunneridae</taxon>
        <taxon>Pentapetalae</taxon>
        <taxon>rosids</taxon>
        <taxon>malvids</taxon>
        <taxon>Brassicales</taxon>
        <taxon>Brassicaceae</taxon>
        <taxon>Camelineae</taxon>
        <taxon>Arabidopsis</taxon>
    </lineage>
</organism>
<reference key="1">
    <citation type="journal article" date="2000" name="DNA Res.">
        <title>Structural analysis of Arabidopsis thaliana chromosome 3. II. Sequence features of the 4,251,695 bp regions covered by 90 P1, TAC and BAC clones.</title>
        <authorList>
            <person name="Kaneko T."/>
            <person name="Katoh T."/>
            <person name="Sato S."/>
            <person name="Nakamura Y."/>
            <person name="Asamizu E."/>
            <person name="Tabata S."/>
        </authorList>
    </citation>
    <scope>NUCLEOTIDE SEQUENCE [LARGE SCALE GENOMIC DNA]</scope>
    <source>
        <strain>cv. Columbia</strain>
    </source>
</reference>
<reference key="2">
    <citation type="journal article" date="2017" name="Plant J.">
        <title>Araport11: a complete reannotation of the Arabidopsis thaliana reference genome.</title>
        <authorList>
            <person name="Cheng C.Y."/>
            <person name="Krishnakumar V."/>
            <person name="Chan A.P."/>
            <person name="Thibaud-Nissen F."/>
            <person name="Schobel S."/>
            <person name="Town C.D."/>
        </authorList>
    </citation>
    <scope>GENOME REANNOTATION</scope>
    <source>
        <strain>cv. Columbia</strain>
    </source>
</reference>
<reference key="3">
    <citation type="journal article" date="2003" name="Science">
        <title>Empirical analysis of transcriptional activity in the Arabidopsis genome.</title>
        <authorList>
            <person name="Yamada K."/>
            <person name="Lim J."/>
            <person name="Dale J.M."/>
            <person name="Chen H."/>
            <person name="Shinn P."/>
            <person name="Palm C.J."/>
            <person name="Southwick A.M."/>
            <person name="Wu H.C."/>
            <person name="Kim C.J."/>
            <person name="Nguyen M."/>
            <person name="Pham P.K."/>
            <person name="Cheuk R.F."/>
            <person name="Karlin-Newmann G."/>
            <person name="Liu S.X."/>
            <person name="Lam B."/>
            <person name="Sakano H."/>
            <person name="Wu T."/>
            <person name="Yu G."/>
            <person name="Miranda M."/>
            <person name="Quach H.L."/>
            <person name="Tripp M."/>
            <person name="Chang C.H."/>
            <person name="Lee J.M."/>
            <person name="Toriumi M.J."/>
            <person name="Chan M.M."/>
            <person name="Tang C.C."/>
            <person name="Onodera C.S."/>
            <person name="Deng J.M."/>
            <person name="Akiyama K."/>
            <person name="Ansari Y."/>
            <person name="Arakawa T."/>
            <person name="Banh J."/>
            <person name="Banno F."/>
            <person name="Bowser L."/>
            <person name="Brooks S.Y."/>
            <person name="Carninci P."/>
            <person name="Chao Q."/>
            <person name="Choy N."/>
            <person name="Enju A."/>
            <person name="Goldsmith A.D."/>
            <person name="Gurjal M."/>
            <person name="Hansen N.F."/>
            <person name="Hayashizaki Y."/>
            <person name="Johnson-Hopson C."/>
            <person name="Hsuan V.W."/>
            <person name="Iida K."/>
            <person name="Karnes M."/>
            <person name="Khan S."/>
            <person name="Koesema E."/>
            <person name="Ishida J."/>
            <person name="Jiang P.X."/>
            <person name="Jones T."/>
            <person name="Kawai J."/>
            <person name="Kamiya A."/>
            <person name="Meyers C."/>
            <person name="Nakajima M."/>
            <person name="Narusaka M."/>
            <person name="Seki M."/>
            <person name="Sakurai T."/>
            <person name="Satou M."/>
            <person name="Tamse R."/>
            <person name="Vaysberg M."/>
            <person name="Wallender E.K."/>
            <person name="Wong C."/>
            <person name="Yamamura Y."/>
            <person name="Yuan S."/>
            <person name="Shinozaki K."/>
            <person name="Davis R.W."/>
            <person name="Theologis A."/>
            <person name="Ecker J.R."/>
        </authorList>
    </citation>
    <scope>NUCLEOTIDE SEQUENCE [LARGE SCALE MRNA] (ISOFORM 1)</scope>
    <source>
        <strain>cv. Columbia</strain>
    </source>
</reference>
<reference key="4">
    <citation type="submission" date="2006-07" db="EMBL/GenBank/DDBJ databases">
        <title>Large-scale analysis of RIKEN Arabidopsis full-length (RAFL) cDNAs.</title>
        <authorList>
            <person name="Totoki Y."/>
            <person name="Seki M."/>
            <person name="Ishida J."/>
            <person name="Nakajima M."/>
            <person name="Enju A."/>
            <person name="Kamiya A."/>
            <person name="Narusaka M."/>
            <person name="Shin-i T."/>
            <person name="Nakagawa M."/>
            <person name="Sakamoto N."/>
            <person name="Oishi K."/>
            <person name="Kohara Y."/>
            <person name="Kobayashi M."/>
            <person name="Toyoda A."/>
            <person name="Sakaki Y."/>
            <person name="Sakurai T."/>
            <person name="Iida K."/>
            <person name="Akiyama K."/>
            <person name="Satou M."/>
            <person name="Toyoda T."/>
            <person name="Konagaya A."/>
            <person name="Carninci P."/>
            <person name="Kawai J."/>
            <person name="Hayashizaki Y."/>
            <person name="Shinozaki K."/>
        </authorList>
    </citation>
    <scope>NUCLEOTIDE SEQUENCE [LARGE SCALE MRNA] (ISOFORM 2)</scope>
    <source>
        <strain>cv. Columbia</strain>
    </source>
</reference>
<accession>Q8VYZ7</accession>
<accession>F4IXT9</accession>
<accession>Q0WVP1</accession>
<accession>Q2V3R8</accession>
<accession>Q9LRS8</accession>
<protein>
    <recommendedName>
        <fullName>WAT1-related protein At3g28070</fullName>
    </recommendedName>
</protein>
<keyword id="KW-0025">Alternative splicing</keyword>
<keyword id="KW-0472">Membrane</keyword>
<keyword id="KW-1185">Reference proteome</keyword>
<keyword id="KW-0812">Transmembrane</keyword>
<keyword id="KW-1133">Transmembrane helix</keyword>
<comment type="subcellular location">
    <subcellularLocation>
        <location evidence="1">Membrane</location>
        <topology evidence="4">Multi-pass membrane protein</topology>
    </subcellularLocation>
</comment>
<comment type="alternative products">
    <event type="alternative splicing"/>
    <isoform>
        <id>Q8VYZ7-1</id>
        <name>1</name>
        <sequence type="displayed"/>
    </isoform>
    <isoform>
        <id>Q8VYZ7-2</id>
        <name>2</name>
        <sequence type="described" ref="VSP_045505 VSP_045506"/>
    </isoform>
    <isoform>
        <id>Q8VYZ7-3</id>
        <name>3</name>
        <sequence type="described" ref="VSP_045504"/>
    </isoform>
</comment>
<comment type="similarity">
    <text evidence="4">Belongs to the drug/metabolite transporter (DMT) superfamily. Plant drug/metabolite exporter (P-DME) (TC 2.A.7.4) family.</text>
</comment>
<comment type="sequence caution" evidence="4">
    <conflict type="erroneous gene model prediction">
        <sequence resource="EMBL-CDS" id="BAB01129"/>
    </conflict>
</comment>
<dbReference type="EMBL" id="AB028616">
    <property type="protein sequence ID" value="BAB01129.1"/>
    <property type="status" value="ALT_SEQ"/>
    <property type="molecule type" value="Genomic_DNA"/>
</dbReference>
<dbReference type="EMBL" id="CP002686">
    <property type="protein sequence ID" value="AEE77397.1"/>
    <property type="molecule type" value="Genomic_DNA"/>
</dbReference>
<dbReference type="EMBL" id="CP002686">
    <property type="protein sequence ID" value="AEE77398.1"/>
    <property type="molecule type" value="Genomic_DNA"/>
</dbReference>
<dbReference type="EMBL" id="CP002686">
    <property type="protein sequence ID" value="AEE77399.1"/>
    <property type="molecule type" value="Genomic_DNA"/>
</dbReference>
<dbReference type="EMBL" id="AY065420">
    <property type="protein sequence ID" value="AAL38861.1"/>
    <property type="molecule type" value="mRNA"/>
</dbReference>
<dbReference type="EMBL" id="AY117250">
    <property type="protein sequence ID" value="AAM51325.1"/>
    <property type="molecule type" value="mRNA"/>
</dbReference>
<dbReference type="EMBL" id="AK226700">
    <property type="protein sequence ID" value="BAE98807.1"/>
    <property type="molecule type" value="mRNA"/>
</dbReference>
<dbReference type="RefSeq" id="NP_001030788.2">
    <molecule id="Q8VYZ7-2"/>
    <property type="nucleotide sequence ID" value="NM_001035711.3"/>
</dbReference>
<dbReference type="RefSeq" id="NP_189446.2">
    <molecule id="Q8VYZ7-1"/>
    <property type="nucleotide sequence ID" value="NM_113725.5"/>
</dbReference>
<dbReference type="RefSeq" id="NP_974370.1">
    <molecule id="Q8VYZ7-3"/>
    <property type="nucleotide sequence ID" value="NM_202641.2"/>
</dbReference>
<dbReference type="SMR" id="Q8VYZ7"/>
<dbReference type="STRING" id="3702.Q8VYZ7"/>
<dbReference type="iPTMnet" id="Q8VYZ7"/>
<dbReference type="PaxDb" id="3702-AT3G28070.1"/>
<dbReference type="EnsemblPlants" id="AT3G28070.1">
    <molecule id="Q8VYZ7-1"/>
    <property type="protein sequence ID" value="AT3G28070.1"/>
    <property type="gene ID" value="AT3G28070"/>
</dbReference>
<dbReference type="EnsemblPlants" id="AT3G28070.2">
    <molecule id="Q8VYZ7-3"/>
    <property type="protein sequence ID" value="AT3G28070.2"/>
    <property type="gene ID" value="AT3G28070"/>
</dbReference>
<dbReference type="EnsemblPlants" id="AT3G28070.3">
    <molecule id="Q8VYZ7-2"/>
    <property type="protein sequence ID" value="AT3G28070.3"/>
    <property type="gene ID" value="AT3G28070"/>
</dbReference>
<dbReference type="Gramene" id="AT3G28070.1">
    <molecule id="Q8VYZ7-1"/>
    <property type="protein sequence ID" value="AT3G28070.1"/>
    <property type="gene ID" value="AT3G28070"/>
</dbReference>
<dbReference type="Gramene" id="AT3G28070.2">
    <molecule id="Q8VYZ7-3"/>
    <property type="protein sequence ID" value="AT3G28070.2"/>
    <property type="gene ID" value="AT3G28070"/>
</dbReference>
<dbReference type="Gramene" id="AT3G28070.3">
    <molecule id="Q8VYZ7-2"/>
    <property type="protein sequence ID" value="AT3G28070.3"/>
    <property type="gene ID" value="AT3G28070"/>
</dbReference>
<dbReference type="KEGG" id="ath:AT3G28070"/>
<dbReference type="Araport" id="AT3G28070"/>
<dbReference type="TAIR" id="AT3G28070">
    <property type="gene designation" value="UMAMIT46"/>
</dbReference>
<dbReference type="eggNOG" id="ENOG502QRQK">
    <property type="taxonomic scope" value="Eukaryota"/>
</dbReference>
<dbReference type="HOGENOM" id="CLU_025359_0_1_1"/>
<dbReference type="InParanoid" id="Q8VYZ7"/>
<dbReference type="OMA" id="LWRREAM"/>
<dbReference type="PhylomeDB" id="Q8VYZ7"/>
<dbReference type="PRO" id="PR:Q8VYZ7"/>
<dbReference type="Proteomes" id="UP000006548">
    <property type="component" value="Chromosome 3"/>
</dbReference>
<dbReference type="ExpressionAtlas" id="Q8VYZ7">
    <property type="expression patterns" value="baseline and differential"/>
</dbReference>
<dbReference type="GO" id="GO:0016020">
    <property type="term" value="C:membrane"/>
    <property type="evidence" value="ECO:0007669"/>
    <property type="project" value="UniProtKB-SubCell"/>
</dbReference>
<dbReference type="GO" id="GO:0022857">
    <property type="term" value="F:transmembrane transporter activity"/>
    <property type="evidence" value="ECO:0007669"/>
    <property type="project" value="InterPro"/>
</dbReference>
<dbReference type="InterPro" id="IPR000620">
    <property type="entry name" value="EamA_dom"/>
</dbReference>
<dbReference type="InterPro" id="IPR030184">
    <property type="entry name" value="WAT1-related"/>
</dbReference>
<dbReference type="PANTHER" id="PTHR31218">
    <property type="entry name" value="WAT1-RELATED PROTEIN"/>
    <property type="match status" value="1"/>
</dbReference>
<dbReference type="Pfam" id="PF00892">
    <property type="entry name" value="EamA"/>
    <property type="match status" value="1"/>
</dbReference>
<dbReference type="SUPFAM" id="SSF103481">
    <property type="entry name" value="Multidrug resistance efflux transporter EmrE"/>
    <property type="match status" value="2"/>
</dbReference>
<gene>
    <name type="ordered locus">At3g28070</name>
    <name type="ORF">MMG15.11</name>
</gene>
<feature type="chain" id="PRO_0000421328" description="WAT1-related protein At3g28070">
    <location>
        <begin position="1"/>
        <end position="360"/>
    </location>
</feature>
<feature type="transmembrane region" description="Helical" evidence="2">
    <location>
        <begin position="15"/>
        <end position="35"/>
    </location>
</feature>
<feature type="transmembrane region" description="Helical" evidence="2">
    <location>
        <begin position="45"/>
        <end position="65"/>
    </location>
</feature>
<feature type="transmembrane region" description="Helical" evidence="2">
    <location>
        <begin position="84"/>
        <end position="104"/>
    </location>
</feature>
<feature type="transmembrane region" description="Helical" evidence="2">
    <location>
        <begin position="108"/>
        <end position="128"/>
    </location>
</feature>
<feature type="transmembrane region" description="Helical" evidence="2">
    <location>
        <begin position="140"/>
        <end position="160"/>
    </location>
</feature>
<feature type="transmembrane region" description="Helical" evidence="2">
    <location>
        <begin position="190"/>
        <end position="210"/>
    </location>
</feature>
<feature type="transmembrane region" description="Helical" evidence="2">
    <location>
        <begin position="224"/>
        <end position="244"/>
    </location>
</feature>
<feature type="transmembrane region" description="Helical" evidence="2">
    <location>
        <begin position="248"/>
        <end position="268"/>
    </location>
</feature>
<feature type="transmembrane region" description="Helical" evidence="2">
    <location>
        <begin position="286"/>
        <end position="306"/>
    </location>
</feature>
<feature type="transmembrane region" description="Helical" evidence="2">
    <location>
        <begin position="311"/>
        <end position="331"/>
    </location>
</feature>
<feature type="domain" description="EamA">
    <location>
        <begin position="30"/>
        <end position="158"/>
    </location>
</feature>
<feature type="splice variant" id="VSP_045504" description="In isoform 3." evidence="4">
    <location>
        <begin position="1"/>
        <end position="92"/>
    </location>
</feature>
<feature type="splice variant" id="VSP_045505" description="In isoform 2." evidence="3">
    <original>LGCL</original>
    <variation>LGWY</variation>
    <location>
        <begin position="313"/>
        <end position="316"/>
    </location>
</feature>
<feature type="splice variant" id="VSP_045506" description="In isoform 2." evidence="3">
    <location>
        <begin position="317"/>
        <end position="360"/>
    </location>
</feature>
<proteinExistence type="evidence at transcript level"/>
<evidence type="ECO:0000250" key="1"/>
<evidence type="ECO:0000255" key="2"/>
<evidence type="ECO:0000303" key="3">
    <source ref="4"/>
</evidence>
<evidence type="ECO:0000305" key="4"/>